<comment type="catalytic activity">
    <reaction evidence="2">
        <text>an N-acyl-D-glutamate + H2O = D-glutamate + a carboxylate</text>
        <dbReference type="Rhea" id="RHEA:12833"/>
        <dbReference type="ChEBI" id="CHEBI:15377"/>
        <dbReference type="ChEBI" id="CHEBI:17503"/>
        <dbReference type="ChEBI" id="CHEBI:29067"/>
        <dbReference type="ChEBI" id="CHEBI:29986"/>
        <dbReference type="EC" id="3.5.1.82"/>
    </reaction>
</comment>
<comment type="cofactor">
    <cofactor evidence="1">
        <name>Zn(2+)</name>
        <dbReference type="ChEBI" id="CHEBI:29105"/>
    </cofactor>
</comment>
<comment type="activity regulation">
    <text evidence="2">Inhibited by cobalt, copper and EDTA.</text>
</comment>
<comment type="biophysicochemical properties">
    <phDependence>
        <text evidence="2">Optimum pH is 7.5.</text>
    </phDependence>
    <temperatureDependence>
        <text evidence="2">Optimum temperature is 55 degrees Celsius.</text>
    </temperatureDependence>
</comment>
<comment type="subcellular location">
    <subcellularLocation>
        <location evidence="1">Cytoplasm</location>
    </subcellularLocation>
</comment>
<comment type="similarity">
    <text evidence="4">Belongs to the metallo-dependent hydrolases superfamily. N-acyl-D-amino-acid deacylase family.</text>
</comment>
<protein>
    <recommendedName>
        <fullName evidence="4">N-acyl-D-glutamate deacylase</fullName>
        <ecNumber evidence="2">3.5.1.82</ecNumber>
    </recommendedName>
    <alternativeName>
        <fullName evidence="3">D-AGase</fullName>
    </alternativeName>
    <alternativeName>
        <fullName evidence="3">N-acyl-D-glutamate amidohydrolase</fullName>
    </alternativeName>
</protein>
<evidence type="ECO:0000250" key="1"/>
<evidence type="ECO:0000269" key="2">
    <source>
    </source>
</evidence>
<evidence type="ECO:0000303" key="3">
    <source>
    </source>
</evidence>
<evidence type="ECO:0000305" key="4"/>
<name>NDED_ALCXX</name>
<proteinExistence type="evidence at protein level"/>
<sequence>MQEKLDLVIEGGWVIDGLGGPRRRADVGIRGERIAAIGDLSAAPADRRLDAGGRIVAPGFIDTHGHDDLMFVEKPGLEWKTSQGITSVVVGNCGISGAPAPLPGNTAAALALLGDSPLFADMAMYFGALEAQRPMINVAALVGHANLRLAAMRDPAAQPSAKEQRAMERMLADALEAGAVGFSTGLAYQPGGVAEQAELDGLARVAAARGALHTSHIRNEGDAVEAAVDEVLAVGRRTGCATVLSHHKCMMPANWGKSAATLANIDRARAAGVDVALDIYPYPGSSTILIPERADQIDDIRITWSTPHPECGGQSLAEIAARWGCDAVTAARRLCPAGAIYFAMDENEVRRIFQHECCMVGSDGLPNDAHPHPRLWGSFTRVLGRYVREAELLTLEAAVAKMTALPARVFGLADRGRLAVGAWADVVVFDADTVCDRATWDAPTLASAGIEHVLVNGCAVFPQAPPSHRPGRILRRDASIAGAPEFSR</sequence>
<gene>
    <name evidence="3" type="primary">dag</name>
</gene>
<reference key="1">
    <citation type="journal article" date="1995" name="J. Biochem.">
        <title>Primary structure of N-acyl-D-glutamate amidohydrolase from Alcaligenes xylosoxydans subsp. xylosoxydans A-6.</title>
        <authorList>
            <person name="Wakayama M."/>
            <person name="Ashika T."/>
            <person name="Miyamoto Y."/>
            <person name="Yoshikawa T."/>
            <person name="Sonoda Y."/>
            <person name="Sakai K."/>
            <person name="Moriguchi M."/>
        </authorList>
    </citation>
    <scope>NUCLEOTIDE SEQUENCE [GENOMIC DNA]</scope>
    <scope>PROTEIN SEQUENCE OF 1-20</scope>
    <scope>CATALYTIC ACTIVITY</scope>
    <scope>ACTIVITY REGULATION</scope>
    <scope>BIOPHYSICOCHEMICAL PROPERTIES</scope>
    <source>
        <strain>A-6</strain>
    </source>
</reference>
<organism>
    <name type="scientific">Alcaligenes xylosoxydans xylosoxydans</name>
    <name type="common">Achromobacter xylosoxidans</name>
    <dbReference type="NCBI Taxonomy" id="85698"/>
    <lineage>
        <taxon>Bacteria</taxon>
        <taxon>Pseudomonadati</taxon>
        <taxon>Pseudomonadota</taxon>
        <taxon>Betaproteobacteria</taxon>
        <taxon>Burkholderiales</taxon>
        <taxon>Alcaligenaceae</taxon>
        <taxon>Achromobacter</taxon>
    </lineage>
</organism>
<feature type="chain" id="PRO_0000182705" description="N-acyl-D-glutamate deacylase">
    <location>
        <begin position="1"/>
        <end position="488"/>
    </location>
</feature>
<accession>P94211</accession>
<dbReference type="EC" id="3.5.1.82" evidence="2"/>
<dbReference type="EMBL" id="D50061">
    <property type="protein sequence ID" value="BAA08778.1"/>
    <property type="molecule type" value="Genomic_DNA"/>
</dbReference>
<dbReference type="PIR" id="JC4165">
    <property type="entry name" value="JC4165"/>
</dbReference>
<dbReference type="RefSeq" id="WP_006384305.1">
    <property type="nucleotide sequence ID" value="NZ_LN890476.1"/>
</dbReference>
<dbReference type="SMR" id="P94211"/>
<dbReference type="PATRIC" id="fig|85698.22.peg.5897"/>
<dbReference type="eggNOG" id="COG3653">
    <property type="taxonomic scope" value="Bacteria"/>
</dbReference>
<dbReference type="GO" id="GO:0005737">
    <property type="term" value="C:cytoplasm"/>
    <property type="evidence" value="ECO:0007669"/>
    <property type="project" value="UniProtKB-SubCell"/>
</dbReference>
<dbReference type="GO" id="GO:0047421">
    <property type="term" value="F:N-acyl-D-glutamate deacylase activity"/>
    <property type="evidence" value="ECO:0007669"/>
    <property type="project" value="UniProtKB-EC"/>
</dbReference>
<dbReference type="CDD" id="cd01297">
    <property type="entry name" value="D-aminoacylase"/>
    <property type="match status" value="1"/>
</dbReference>
<dbReference type="Gene3D" id="3.30.1490.130">
    <property type="entry name" value="D-aminoacylase. Domain 3"/>
    <property type="match status" value="1"/>
</dbReference>
<dbReference type="Gene3D" id="3.20.20.140">
    <property type="entry name" value="Metal-dependent hydrolases"/>
    <property type="match status" value="1"/>
</dbReference>
<dbReference type="Gene3D" id="2.30.40.10">
    <property type="entry name" value="Urease, subunit C, domain 1"/>
    <property type="match status" value="1"/>
</dbReference>
<dbReference type="InterPro" id="IPR013108">
    <property type="entry name" value="Amidohydro_3"/>
</dbReference>
<dbReference type="InterPro" id="IPR023100">
    <property type="entry name" value="D-aminoacylase_insert_dom_sf"/>
</dbReference>
<dbReference type="InterPro" id="IPR011059">
    <property type="entry name" value="Metal-dep_hydrolase_composite"/>
</dbReference>
<dbReference type="InterPro" id="IPR032466">
    <property type="entry name" value="Metal_Hydrolase"/>
</dbReference>
<dbReference type="InterPro" id="IPR050378">
    <property type="entry name" value="Metallo-dep_Hydrolases_sf"/>
</dbReference>
<dbReference type="PANTHER" id="PTHR11647:SF1">
    <property type="entry name" value="COLLAPSIN RESPONSE MEDIATOR PROTEIN"/>
    <property type="match status" value="1"/>
</dbReference>
<dbReference type="PANTHER" id="PTHR11647">
    <property type="entry name" value="HYDRANTOINASE/DIHYDROPYRIMIDINASE FAMILY MEMBER"/>
    <property type="match status" value="1"/>
</dbReference>
<dbReference type="Pfam" id="PF07969">
    <property type="entry name" value="Amidohydro_3"/>
    <property type="match status" value="2"/>
</dbReference>
<dbReference type="SUPFAM" id="SSF51338">
    <property type="entry name" value="Composite domain of metallo-dependent hydrolases"/>
    <property type="match status" value="1"/>
</dbReference>
<dbReference type="SUPFAM" id="SSF51556">
    <property type="entry name" value="Metallo-dependent hydrolases"/>
    <property type="match status" value="1"/>
</dbReference>
<keyword id="KW-0963">Cytoplasm</keyword>
<keyword id="KW-0903">Direct protein sequencing</keyword>
<keyword id="KW-0378">Hydrolase</keyword>
<keyword id="KW-0862">Zinc</keyword>